<keyword id="KW-0903">Direct protein sequencing</keyword>
<keyword id="KW-1015">Disulfide bond</keyword>
<keyword id="KW-0964">Secreted</keyword>
<reference evidence="4" key="1">
    <citation type="journal article" date="2019" name="Toxicon">
        <title>Novel three-finger toxins from Micrurus dumerilii and Micrurus mipartitus coral snake venoms: Phylogenetic relationships and characterization of Clarkitoxin-I-Mdum.</title>
        <authorList>
            <person name="Rey-Suarez P."/>
            <person name="Saldarriaga-Cordoba M."/>
            <person name="Torres U."/>
            <person name="Marin-Villa M."/>
            <person name="Lomonte B."/>
            <person name="Nunez V."/>
        </authorList>
    </citation>
    <scope>PROTEIN SEQUENCE</scope>
    <scope>IDENTIFICATION BY MASS SPECTROMETRY</scope>
    <scope>FUNCTION</scope>
    <scope>SUBCELLULAR LOCATION</scope>
    <scope>TISSUE SPECIFICITY</scope>
    <source>
        <tissue evidence="3">Venom</tissue>
    </source>
</reference>
<accession>C0HLK5</accession>
<dbReference type="SMR" id="C0HLK5"/>
<dbReference type="GO" id="GO:0005576">
    <property type="term" value="C:extracellular region"/>
    <property type="evidence" value="ECO:0000314"/>
    <property type="project" value="UniProtKB"/>
</dbReference>
<dbReference type="GO" id="GO:0090729">
    <property type="term" value="F:toxin activity"/>
    <property type="evidence" value="ECO:0007669"/>
    <property type="project" value="InterPro"/>
</dbReference>
<dbReference type="CDD" id="cd00206">
    <property type="entry name" value="TFP_snake_toxin"/>
    <property type="match status" value="1"/>
</dbReference>
<dbReference type="Gene3D" id="2.10.60.10">
    <property type="entry name" value="CD59"/>
    <property type="match status" value="1"/>
</dbReference>
<dbReference type="InterPro" id="IPR003571">
    <property type="entry name" value="Snake_3FTx"/>
</dbReference>
<dbReference type="InterPro" id="IPR045860">
    <property type="entry name" value="Snake_toxin-like_sf"/>
</dbReference>
<dbReference type="InterPro" id="IPR054131">
    <property type="entry name" value="Toxin_cobra-type"/>
</dbReference>
<dbReference type="Pfam" id="PF21947">
    <property type="entry name" value="Toxin_cobra-type"/>
    <property type="match status" value="1"/>
</dbReference>
<dbReference type="SUPFAM" id="SSF57302">
    <property type="entry name" value="Snake toxin-like"/>
    <property type="match status" value="1"/>
</dbReference>
<name>3SX1_MICDM</name>
<feature type="chain" id="PRO_0000450601" description="Clarkitoxin-I-Mdum">
    <location>
        <begin position="1"/>
        <end position="66"/>
    </location>
</feature>
<feature type="disulfide bond" evidence="1">
    <location>
        <begin position="3"/>
        <end position="24"/>
    </location>
</feature>
<feature type="disulfide bond" evidence="1">
    <location>
        <begin position="17"/>
        <end position="42"/>
    </location>
</feature>
<feature type="disulfide bond" evidence="1">
    <location>
        <begin position="46"/>
        <end position="59"/>
    </location>
</feature>
<feature type="disulfide bond" evidence="1">
    <location>
        <begin position="60"/>
        <end position="65"/>
    </location>
</feature>
<comment type="function">
    <text evidence="2">No toxicity is observed upon intravenous or intracerebroventricular injection into mice. Has no cytotoxic activity towards C2C12 cells at 100 ug/ml.</text>
</comment>
<comment type="subcellular location">
    <subcellularLocation>
        <location evidence="2">Secreted</location>
    </subcellularLocation>
</comment>
<comment type="tissue specificity">
    <text evidence="5">Expressed by the venom gland.</text>
</comment>
<comment type="mass spectrometry" mass="7537.0" method="Electrospray" evidence="2"/>
<comment type="similarity">
    <text evidence="4">Belongs to the three-finger toxin family. Short-chain subfamily.</text>
</comment>
<evidence type="ECO:0000250" key="1">
    <source>
        <dbReference type="UniProtKB" id="P0DKS3"/>
    </source>
</evidence>
<evidence type="ECO:0000269" key="2">
    <source>
    </source>
</evidence>
<evidence type="ECO:0000303" key="3">
    <source>
    </source>
</evidence>
<evidence type="ECO:0000305" key="4"/>
<evidence type="ECO:0000305" key="5">
    <source>
    </source>
</evidence>
<proteinExistence type="evidence at protein level"/>
<protein>
    <recommendedName>
        <fullName evidence="3">Clarkitoxin-I-Mdum</fullName>
    </recommendedName>
    <alternativeName>
        <fullName evidence="3">Dumertoxin-1</fullName>
    </alternativeName>
</protein>
<sequence length="66" mass="7544">RICDDSSIPFLRTPQLCPKGQDVCYKKTPIVKKFKWLQKKGCASSCPKDGFIKIFKIECCTKDNCI</sequence>
<organism evidence="3">
    <name type="scientific">Micrurus dumerilii</name>
    <name type="common">Coral snake</name>
    <dbReference type="NCBI Taxonomy" id="1337871"/>
    <lineage>
        <taxon>Eukaryota</taxon>
        <taxon>Metazoa</taxon>
        <taxon>Chordata</taxon>
        <taxon>Craniata</taxon>
        <taxon>Vertebrata</taxon>
        <taxon>Euteleostomi</taxon>
        <taxon>Lepidosauria</taxon>
        <taxon>Squamata</taxon>
        <taxon>Bifurcata</taxon>
        <taxon>Unidentata</taxon>
        <taxon>Episquamata</taxon>
        <taxon>Toxicofera</taxon>
        <taxon>Serpentes</taxon>
        <taxon>Colubroidea</taxon>
        <taxon>Elapidae</taxon>
        <taxon>Elapinae</taxon>
        <taxon>Micrurus</taxon>
    </lineage>
</organism>